<comment type="function">
    <text evidence="1">Catalyzes the phosphorylation of autoinducer-2 (AI-2) to phospho-AI-2, which subsequently inactivates the transcriptional regulator LsrR and leads to the transcription of the lsr operon. Phosphorylates the ring-open form of (S)-4,5-dihydroxypentane-2,3-dione (DPD), which is the precursor to all AI-2 signaling molecules, at the C5 position.</text>
</comment>
<comment type="catalytic activity">
    <reaction evidence="1">
        <text>(S)-4,5-dihydroxypentane-2,3-dione + ATP = (2S)-2-hydroxy-3,4-dioxopentyl phosphate + ADP + H(+)</text>
        <dbReference type="Rhea" id="RHEA:15377"/>
        <dbReference type="ChEBI" id="CHEBI:15378"/>
        <dbReference type="ChEBI" id="CHEBI:29484"/>
        <dbReference type="ChEBI" id="CHEBI:30616"/>
        <dbReference type="ChEBI" id="CHEBI:71677"/>
        <dbReference type="ChEBI" id="CHEBI:456216"/>
        <dbReference type="EC" id="2.7.1.189"/>
    </reaction>
</comment>
<comment type="subcellular location">
    <subcellularLocation>
        <location evidence="1">Cytoplasm</location>
    </subcellularLocation>
</comment>
<comment type="similarity">
    <text evidence="1">Belongs to the FGGY kinase family.</text>
</comment>
<accession>B2K3G3</accession>
<name>LSRK_YERPB</name>
<dbReference type="EC" id="2.7.1.189" evidence="1"/>
<dbReference type="EMBL" id="CP001048">
    <property type="protein sequence ID" value="ACC87562.1"/>
    <property type="molecule type" value="Genomic_DNA"/>
</dbReference>
<dbReference type="RefSeq" id="WP_002230543.1">
    <property type="nucleotide sequence ID" value="NZ_CP009780.1"/>
</dbReference>
<dbReference type="SMR" id="B2K3G3"/>
<dbReference type="GeneID" id="96664058"/>
<dbReference type="KEGG" id="ypb:YPTS_0578"/>
<dbReference type="PATRIC" id="fig|502801.10.peg.4255"/>
<dbReference type="GO" id="GO:0005737">
    <property type="term" value="C:cytoplasm"/>
    <property type="evidence" value="ECO:0007669"/>
    <property type="project" value="UniProtKB-SubCell"/>
</dbReference>
<dbReference type="GO" id="GO:0071518">
    <property type="term" value="F:autoinducer-2 kinase activity"/>
    <property type="evidence" value="ECO:0007669"/>
    <property type="project" value="UniProtKB-UniRule"/>
</dbReference>
<dbReference type="GO" id="GO:0005975">
    <property type="term" value="P:carbohydrate metabolic process"/>
    <property type="evidence" value="ECO:0007669"/>
    <property type="project" value="InterPro"/>
</dbReference>
<dbReference type="GO" id="GO:0009372">
    <property type="term" value="P:quorum sensing"/>
    <property type="evidence" value="ECO:0007669"/>
    <property type="project" value="InterPro"/>
</dbReference>
<dbReference type="CDD" id="cd07775">
    <property type="entry name" value="ASKHA_NBD_FGGY_AI-2K"/>
    <property type="match status" value="1"/>
</dbReference>
<dbReference type="Gene3D" id="3.30.420.40">
    <property type="match status" value="2"/>
</dbReference>
<dbReference type="HAMAP" id="MF_02053">
    <property type="entry name" value="LsrK"/>
    <property type="match status" value="1"/>
</dbReference>
<dbReference type="InterPro" id="IPR033676">
    <property type="entry name" value="AI-2_kinase"/>
</dbReference>
<dbReference type="InterPro" id="IPR043129">
    <property type="entry name" value="ATPase_NBD"/>
</dbReference>
<dbReference type="InterPro" id="IPR000577">
    <property type="entry name" value="Carb_kinase_FGGY"/>
</dbReference>
<dbReference type="InterPro" id="IPR018485">
    <property type="entry name" value="FGGY_C"/>
</dbReference>
<dbReference type="InterPro" id="IPR050406">
    <property type="entry name" value="FGGY_Carb_Kinase"/>
</dbReference>
<dbReference type="InterPro" id="IPR018484">
    <property type="entry name" value="FGGY_N"/>
</dbReference>
<dbReference type="NCBIfam" id="NF008187">
    <property type="entry name" value="PRK10939.1"/>
    <property type="match status" value="1"/>
</dbReference>
<dbReference type="PANTHER" id="PTHR43095:SF1">
    <property type="entry name" value="AUTOINDUCER-2 KINASE"/>
    <property type="match status" value="1"/>
</dbReference>
<dbReference type="PANTHER" id="PTHR43095">
    <property type="entry name" value="SUGAR KINASE"/>
    <property type="match status" value="1"/>
</dbReference>
<dbReference type="Pfam" id="PF02782">
    <property type="entry name" value="FGGY_C"/>
    <property type="match status" value="1"/>
</dbReference>
<dbReference type="Pfam" id="PF00370">
    <property type="entry name" value="FGGY_N"/>
    <property type="match status" value="1"/>
</dbReference>
<dbReference type="PIRSF" id="PIRSF000538">
    <property type="entry name" value="GlpK"/>
    <property type="match status" value="1"/>
</dbReference>
<dbReference type="SUPFAM" id="SSF53067">
    <property type="entry name" value="Actin-like ATPase domain"/>
    <property type="match status" value="2"/>
</dbReference>
<organism>
    <name type="scientific">Yersinia pseudotuberculosis serotype IB (strain PB1/+)</name>
    <dbReference type="NCBI Taxonomy" id="502801"/>
    <lineage>
        <taxon>Bacteria</taxon>
        <taxon>Pseudomonadati</taxon>
        <taxon>Pseudomonadota</taxon>
        <taxon>Gammaproteobacteria</taxon>
        <taxon>Enterobacterales</taxon>
        <taxon>Yersiniaceae</taxon>
        <taxon>Yersinia</taxon>
    </lineage>
</organism>
<evidence type="ECO:0000255" key="1">
    <source>
        <dbReference type="HAMAP-Rule" id="MF_02053"/>
    </source>
</evidence>
<feature type="chain" id="PRO_0000351607" description="Autoinducer-2 kinase">
    <location>
        <begin position="1"/>
        <end position="530"/>
    </location>
</feature>
<reference key="1">
    <citation type="submission" date="2008-04" db="EMBL/GenBank/DDBJ databases">
        <title>Complete sequence of Yersinia pseudotuberculosis PB1/+.</title>
        <authorList>
            <person name="Copeland A."/>
            <person name="Lucas S."/>
            <person name="Lapidus A."/>
            <person name="Glavina del Rio T."/>
            <person name="Dalin E."/>
            <person name="Tice H."/>
            <person name="Bruce D."/>
            <person name="Goodwin L."/>
            <person name="Pitluck S."/>
            <person name="Munk A.C."/>
            <person name="Brettin T."/>
            <person name="Detter J.C."/>
            <person name="Han C."/>
            <person name="Tapia R."/>
            <person name="Schmutz J."/>
            <person name="Larimer F."/>
            <person name="Land M."/>
            <person name="Hauser L."/>
            <person name="Challacombe J.F."/>
            <person name="Green L."/>
            <person name="Lindler L.E."/>
            <person name="Nikolich M.P."/>
            <person name="Richardson P."/>
        </authorList>
    </citation>
    <scope>NUCLEOTIDE SEQUENCE [LARGE SCALE GENOMIC DNA]</scope>
    <source>
        <strain>PB1/+</strain>
    </source>
</reference>
<keyword id="KW-0963">Cytoplasm</keyword>
<keyword id="KW-0418">Kinase</keyword>
<keyword id="KW-0808">Transferase</keyword>
<gene>
    <name evidence="1" type="primary">lsrK</name>
    <name type="ordered locus">YPTS_0578</name>
</gene>
<protein>
    <recommendedName>
        <fullName evidence="1">Autoinducer-2 kinase</fullName>
        <shortName evidence="1">AI-2 kinase</shortName>
        <ecNumber evidence="1">2.7.1.189</ecNumber>
    </recommendedName>
</protein>
<proteinExistence type="inferred from homology"/>
<sequence length="530" mass="56995">MSQLDTTTPSGDYLMALDAGTGSVRAVIFDLNGNQIAAGQAEWLHLPVPDVPGSMEFDLTTNWQLTCQCIRQALHLAKLPASAIRAVAACSMREGIVLYDRSGTPIWACANVDARASREVSELKELHNNGFELEVYQCSGQTLALSAMPRLLWLAHYRPDIYRQAGTLTMISDWLANMLSGELAVDPSNAGTTGMLDLVTRNWQPNLLEMAGLRADILSPVKETGTLLGHVTAKAAQECGLLAGTPVVMGGGDVQLGCLGLGVVHAGQTAVLGGTFWQQVVNLPQPIIDPNMNTRINPHVIPGMVQAESISFFTGLTMRWFRDAFCAEEKLLAQRLGIDTYSLLEDMAARVPAGAYGVMPIFSDVMRFKSWYHAAPSFINLSLDPEKCNKATLFRALEENAAIVSACNLAQIAEFSGVKASSVVFAGGGAKGKLWSQILADVTGVPVKVPVVKEATALGCAIAAGVGVGLYEALDKTGERLVRWEREYIPNTEHKALYQAAKTNWQAVYTDQLGLVDCGLTTSLWKAPGL</sequence>